<protein>
    <recommendedName>
        <fullName evidence="9">COMPASS component SWD3</fullName>
    </recommendedName>
    <alternativeName>
        <fullName evidence="9">Complex proteins associated with SET1 protein SWD3</fullName>
    </alternativeName>
    <alternativeName>
        <fullName evidence="9">Set1C component SWD3</fullName>
    </alternativeName>
</protein>
<comment type="function">
    <text evidence="3 4 6 7">The COMPASS (Set1C) complex specifically mono-, di- and trimethylates histone H3 to form H3K4me1/2/3, which subsequently plays a role in telomere length maintenance and transcription elongation regulation (PubMed:11742990, PubMed:11805083). COMPASS recognizes ubiquitinated H2B on one face of the nucleosome which stimulates the methylation of H3 on the opposing face (PubMed:31922488). SWD3/CPS30 establishes COMPASS trimethylation activity and may also serve as the anchor point to properly tether and space the other subunits (PubMed:30100186).</text>
</comment>
<comment type="subunit">
    <text evidence="2 3 5 6 7">Component of the Set1C/COMPASS complex which consists of SET1(2), BRE2(2), SPP1(2), SDC1(1), SHG1(1), SWD1(1), SWD2(1), and SWD3(1).</text>
</comment>
<comment type="interaction">
    <interactant intactId="EBI-20881">
        <id>P38123</id>
    </interactant>
    <interactant intactId="EBI-20737">
        <id>P39706</id>
        <label>SWD1</label>
    </interactant>
    <organismsDiffer>false</organismsDiffer>
    <experiments>7</experiments>
</comment>
<comment type="subcellular location">
    <subcellularLocation>
        <location evidence="11">Nucleus</location>
    </subcellularLocation>
    <subcellularLocation>
        <location evidence="11">Chromosome</location>
        <location evidence="11">Telomere</location>
    </subcellularLocation>
</comment>
<keyword id="KW-0002">3D-structure</keyword>
<keyword id="KW-0158">Chromosome</keyword>
<keyword id="KW-0539">Nucleus</keyword>
<keyword id="KW-1185">Reference proteome</keyword>
<keyword id="KW-0677">Repeat</keyword>
<keyword id="KW-0779">Telomere</keyword>
<keyword id="KW-0853">WD repeat</keyword>
<dbReference type="EMBL" id="Z36043">
    <property type="protein sequence ID" value="CAA85136.1"/>
    <property type="molecule type" value="Genomic_DNA"/>
</dbReference>
<dbReference type="EMBL" id="AY693212">
    <property type="protein sequence ID" value="AAT93231.1"/>
    <property type="molecule type" value="Genomic_DNA"/>
</dbReference>
<dbReference type="EMBL" id="BK006936">
    <property type="protein sequence ID" value="DAA07290.1"/>
    <property type="molecule type" value="Genomic_DNA"/>
</dbReference>
<dbReference type="PIR" id="S46046">
    <property type="entry name" value="S46046"/>
</dbReference>
<dbReference type="RefSeq" id="NP_009734.1">
    <property type="nucleotide sequence ID" value="NM_001178523.1"/>
</dbReference>
<dbReference type="PDB" id="6BX3">
    <property type="method" value="EM"/>
    <property type="resolution" value="4.30 A"/>
    <property type="chains" value="A=2-315"/>
</dbReference>
<dbReference type="PDB" id="6VEN">
    <property type="method" value="EM"/>
    <property type="resolution" value="3.37 A"/>
    <property type="chains" value="L=1-315"/>
</dbReference>
<dbReference type="PDBsum" id="6BX3"/>
<dbReference type="PDBsum" id="6VEN"/>
<dbReference type="EMDB" id="EMD-21157"/>
<dbReference type="EMDB" id="EMD-7303"/>
<dbReference type="SMR" id="P38123"/>
<dbReference type="BioGRID" id="32874">
    <property type="interactions" value="333"/>
</dbReference>
<dbReference type="ComplexPortal" id="CPX-1039">
    <property type="entry name" value="COMPASS complex"/>
</dbReference>
<dbReference type="DIP" id="DIP-1754N"/>
<dbReference type="FunCoup" id="P38123">
    <property type="interactions" value="94"/>
</dbReference>
<dbReference type="IntAct" id="P38123">
    <property type="interactions" value="34"/>
</dbReference>
<dbReference type="MINT" id="P38123"/>
<dbReference type="STRING" id="4932.YBR175W"/>
<dbReference type="iPTMnet" id="P38123"/>
<dbReference type="PaxDb" id="4932-YBR175W"/>
<dbReference type="PeptideAtlas" id="P38123"/>
<dbReference type="EnsemblFungi" id="YBR175W_mRNA">
    <property type="protein sequence ID" value="YBR175W"/>
    <property type="gene ID" value="YBR175W"/>
</dbReference>
<dbReference type="GeneID" id="852472"/>
<dbReference type="KEGG" id="sce:YBR175W"/>
<dbReference type="AGR" id="SGD:S000000379"/>
<dbReference type="SGD" id="S000000379">
    <property type="gene designation" value="SWD3"/>
</dbReference>
<dbReference type="VEuPathDB" id="FungiDB:YBR175W"/>
<dbReference type="eggNOG" id="KOG0266">
    <property type="taxonomic scope" value="Eukaryota"/>
</dbReference>
<dbReference type="HOGENOM" id="CLU_000288_57_1_1"/>
<dbReference type="InParanoid" id="P38123"/>
<dbReference type="OMA" id="NYALKCT"/>
<dbReference type="OrthoDB" id="674604at2759"/>
<dbReference type="BioCyc" id="YEAST:G3O-29122-MONOMER"/>
<dbReference type="Reactome" id="R-SCE-3214841">
    <property type="pathway name" value="PKMTs methylate histone lysines"/>
</dbReference>
<dbReference type="Reactome" id="R-SCE-3214858">
    <property type="pathway name" value="RMTs methylate histone arginines"/>
</dbReference>
<dbReference type="Reactome" id="R-SCE-9772755">
    <property type="pathway name" value="Formation of WDR5-containing histone-modifying complexes"/>
</dbReference>
<dbReference type="BioGRID-ORCS" id="852472">
    <property type="hits" value="4 hits in 10 CRISPR screens"/>
</dbReference>
<dbReference type="PRO" id="PR:P38123"/>
<dbReference type="Proteomes" id="UP000002311">
    <property type="component" value="Chromosome II"/>
</dbReference>
<dbReference type="RNAct" id="P38123">
    <property type="molecule type" value="protein"/>
</dbReference>
<dbReference type="GO" id="GO:0000781">
    <property type="term" value="C:chromosome, telomeric region"/>
    <property type="evidence" value="ECO:0007669"/>
    <property type="project" value="UniProtKB-SubCell"/>
</dbReference>
<dbReference type="GO" id="GO:0005634">
    <property type="term" value="C:nucleus"/>
    <property type="evidence" value="ECO:0000303"/>
    <property type="project" value="ComplexPortal"/>
</dbReference>
<dbReference type="GO" id="GO:0048188">
    <property type="term" value="C:Set1C/COMPASS complex"/>
    <property type="evidence" value="ECO:0000314"/>
    <property type="project" value="UniProtKB"/>
</dbReference>
<dbReference type="GO" id="GO:0042393">
    <property type="term" value="F:histone binding"/>
    <property type="evidence" value="ECO:0000318"/>
    <property type="project" value="GO_Central"/>
</dbReference>
<dbReference type="GO" id="GO:1903341">
    <property type="term" value="P:regulation of meiotic DNA double-strand break formation"/>
    <property type="evidence" value="ECO:0000315"/>
    <property type="project" value="SGD"/>
</dbReference>
<dbReference type="GO" id="GO:0031509">
    <property type="term" value="P:subtelomeric heterochromatin formation"/>
    <property type="evidence" value="ECO:0000315"/>
    <property type="project" value="SGD"/>
</dbReference>
<dbReference type="GO" id="GO:0000723">
    <property type="term" value="P:telomere maintenance"/>
    <property type="evidence" value="ECO:0000315"/>
    <property type="project" value="SGD"/>
</dbReference>
<dbReference type="CDD" id="cd00200">
    <property type="entry name" value="WD40"/>
    <property type="match status" value="1"/>
</dbReference>
<dbReference type="FunFam" id="2.130.10.10:FF:000971">
    <property type="entry name" value="COMPASS component SWD3"/>
    <property type="match status" value="1"/>
</dbReference>
<dbReference type="Gene3D" id="2.130.10.10">
    <property type="entry name" value="YVTN repeat-like/Quinoprotein amine dehydrogenase"/>
    <property type="match status" value="1"/>
</dbReference>
<dbReference type="InterPro" id="IPR015943">
    <property type="entry name" value="WD40/YVTN_repeat-like_dom_sf"/>
</dbReference>
<dbReference type="InterPro" id="IPR036322">
    <property type="entry name" value="WD40_repeat_dom_sf"/>
</dbReference>
<dbReference type="InterPro" id="IPR001680">
    <property type="entry name" value="WD40_rpt"/>
</dbReference>
<dbReference type="PANTHER" id="PTHR22847:SF637">
    <property type="entry name" value="WD REPEAT DOMAIN 5B"/>
    <property type="match status" value="1"/>
</dbReference>
<dbReference type="PANTHER" id="PTHR22847">
    <property type="entry name" value="WD40 REPEAT PROTEIN"/>
    <property type="match status" value="1"/>
</dbReference>
<dbReference type="Pfam" id="PF00400">
    <property type="entry name" value="WD40"/>
    <property type="match status" value="4"/>
</dbReference>
<dbReference type="SMART" id="SM00320">
    <property type="entry name" value="WD40"/>
    <property type="match status" value="7"/>
</dbReference>
<dbReference type="SUPFAM" id="SSF50978">
    <property type="entry name" value="WD40 repeat-like"/>
    <property type="match status" value="1"/>
</dbReference>
<dbReference type="PROSITE" id="PS00678">
    <property type="entry name" value="WD_REPEATS_1"/>
    <property type="match status" value="1"/>
</dbReference>
<dbReference type="PROSITE" id="PS50082">
    <property type="entry name" value="WD_REPEATS_2"/>
    <property type="match status" value="3"/>
</dbReference>
<dbReference type="PROSITE" id="PS50294">
    <property type="entry name" value="WD_REPEATS_REGION"/>
    <property type="match status" value="1"/>
</dbReference>
<accession>P38123</accession>
<accession>D6VQH0</accession>
<organism>
    <name type="scientific">Saccharomyces cerevisiae (strain ATCC 204508 / S288c)</name>
    <name type="common">Baker's yeast</name>
    <dbReference type="NCBI Taxonomy" id="559292"/>
    <lineage>
        <taxon>Eukaryota</taxon>
        <taxon>Fungi</taxon>
        <taxon>Dikarya</taxon>
        <taxon>Ascomycota</taxon>
        <taxon>Saccharomycotina</taxon>
        <taxon>Saccharomycetes</taxon>
        <taxon>Saccharomycetales</taxon>
        <taxon>Saccharomycetaceae</taxon>
        <taxon>Saccharomyces</taxon>
    </lineage>
</organism>
<gene>
    <name evidence="9" type="primary">SWD3</name>
    <name evidence="8" type="synonym">CPS30</name>
    <name evidence="10" type="synonym">SAF35</name>
    <name type="ordered locus">YBR175W</name>
    <name type="ORF">YBR1237</name>
</gene>
<name>SWD3_YEAST</name>
<proteinExistence type="evidence at protein level"/>
<feature type="chain" id="PRO_0000051255" description="COMPASS component SWD3">
    <location>
        <begin position="1"/>
        <end position="315"/>
    </location>
</feature>
<feature type="repeat" description="WD 1" evidence="1">
    <location>
        <begin position="53"/>
        <end position="93"/>
    </location>
</feature>
<feature type="repeat" description="WD 2" evidence="1">
    <location>
        <begin position="94"/>
        <end position="133"/>
    </location>
</feature>
<feature type="repeat" description="WD 3" evidence="1">
    <location>
        <begin position="136"/>
        <end position="178"/>
    </location>
</feature>
<feature type="repeat" description="WD 4" evidence="1">
    <location>
        <begin position="187"/>
        <end position="228"/>
    </location>
</feature>
<feature type="repeat" description="WD 5" evidence="1">
    <location>
        <begin position="238"/>
        <end position="278"/>
    </location>
</feature>
<feature type="repeat" description="WD 6" evidence="1">
    <location>
        <begin position="285"/>
        <end position="315"/>
    </location>
</feature>
<feature type="mutagenesis site" description="Results in nearly 50% loss of H3K4me3; when associated with K-182 and K-186." evidence="6">
    <original>D</original>
    <variation>K</variation>
    <location>
        <position position="180"/>
    </location>
</feature>
<feature type="mutagenesis site" description="Results in nearly 50% loss of H3K4me3; when associated with K-180 and K-186." evidence="6">
    <original>D</original>
    <variation>K</variation>
    <location>
        <position position="182"/>
    </location>
</feature>
<feature type="mutagenesis site" description="Results in nearly 50% loss of H3K4me3; when associated with K-180 and K-182." evidence="6">
    <original>E</original>
    <variation>K</variation>
    <location>
        <position position="186"/>
    </location>
</feature>
<feature type="strand" evidence="14">
    <location>
        <begin position="19"/>
        <end position="21"/>
    </location>
</feature>
<feature type="strand" evidence="14">
    <location>
        <begin position="27"/>
        <end position="32"/>
    </location>
</feature>
<feature type="strand" evidence="14">
    <location>
        <begin position="35"/>
        <end position="40"/>
    </location>
</feature>
<feature type="strand" evidence="14">
    <location>
        <begin position="47"/>
        <end position="51"/>
    </location>
</feature>
<feature type="strand" evidence="14">
    <location>
        <begin position="58"/>
        <end position="62"/>
    </location>
</feature>
<feature type="strand" evidence="14">
    <location>
        <begin position="67"/>
        <end position="74"/>
    </location>
</feature>
<feature type="strand" evidence="14">
    <location>
        <begin position="79"/>
        <end position="83"/>
    </location>
</feature>
<feature type="turn" evidence="14">
    <location>
        <begin position="84"/>
        <end position="86"/>
    </location>
</feature>
<feature type="strand" evidence="14">
    <location>
        <begin position="87"/>
        <end position="92"/>
    </location>
</feature>
<feature type="strand" evidence="14">
    <location>
        <begin position="102"/>
        <end position="104"/>
    </location>
</feature>
<feature type="strand" evidence="14">
    <location>
        <begin position="110"/>
        <end position="114"/>
    </location>
</feature>
<feature type="strand" evidence="14">
    <location>
        <begin position="116"/>
        <end position="118"/>
    </location>
</feature>
<feature type="strand" evidence="14">
    <location>
        <begin position="120"/>
        <end position="124"/>
    </location>
</feature>
<feature type="turn" evidence="14">
    <location>
        <begin position="125"/>
        <end position="127"/>
    </location>
</feature>
<feature type="strand" evidence="14">
    <location>
        <begin position="130"/>
        <end position="134"/>
    </location>
</feature>
<feature type="strand" evidence="14">
    <location>
        <begin position="141"/>
        <end position="145"/>
    </location>
</feature>
<feature type="strand" evidence="14">
    <location>
        <begin position="152"/>
        <end position="158"/>
    </location>
</feature>
<feature type="strand" evidence="14">
    <location>
        <begin position="163"/>
        <end position="167"/>
    </location>
</feature>
<feature type="turn" evidence="14">
    <location>
        <begin position="168"/>
        <end position="170"/>
    </location>
</feature>
<feature type="strand" evidence="14">
    <location>
        <begin position="173"/>
        <end position="176"/>
    </location>
</feature>
<feature type="helix" evidence="14">
    <location>
        <begin position="181"/>
        <end position="183"/>
    </location>
</feature>
<feature type="helix" evidence="14">
    <location>
        <begin position="186"/>
        <end position="188"/>
    </location>
</feature>
<feature type="strand" evidence="14">
    <location>
        <begin position="192"/>
        <end position="197"/>
    </location>
</feature>
<feature type="strand" evidence="14">
    <location>
        <begin position="201"/>
        <end position="208"/>
    </location>
</feature>
<feature type="strand" evidence="14">
    <location>
        <begin position="213"/>
        <end position="217"/>
    </location>
</feature>
<feature type="turn" evidence="14">
    <location>
        <begin position="218"/>
        <end position="221"/>
    </location>
</feature>
<feature type="strand" evidence="14">
    <location>
        <begin position="222"/>
        <end position="227"/>
    </location>
</feature>
<feature type="strand" evidence="14">
    <location>
        <begin position="233"/>
        <end position="236"/>
    </location>
</feature>
<feature type="strand" evidence="14">
    <location>
        <begin position="243"/>
        <end position="246"/>
    </location>
</feature>
<feature type="strand" evidence="14">
    <location>
        <begin position="255"/>
        <end position="258"/>
    </location>
</feature>
<feature type="strand" evidence="14">
    <location>
        <begin position="261"/>
        <end position="269"/>
    </location>
</feature>
<feature type="turn" evidence="14">
    <location>
        <begin position="270"/>
        <end position="272"/>
    </location>
</feature>
<feature type="strand" evidence="14">
    <location>
        <begin position="275"/>
        <end position="280"/>
    </location>
</feature>
<feature type="strand" evidence="14">
    <location>
        <begin position="290"/>
        <end position="296"/>
    </location>
</feature>
<feature type="strand" evidence="14">
    <location>
        <begin position="299"/>
        <end position="307"/>
    </location>
</feature>
<feature type="strand" evidence="14">
    <location>
        <begin position="309"/>
        <end position="312"/>
    </location>
</feature>
<sequence length="315" mass="34754">MFQFVTPVGTQNGLKATCAKISPDGQFLAITQGLNILIYDINRRTVSQTLVTSHARPFSELCWSPDGQCIATASDDFSVEIIHLSYGLLHTFIGHTAPVISLTFNRKGNLLFTSSMDESIKIWDTLNGSLMKTISAHSEAVVSVDVPMNDSSILSSGSYDGLIRIFDAETGHCLKTLTYDKDWKRENGVVPISQVKFSENARYLLVKSLDGVVKIWDCIGGCVVRTFQVQPLEKGVLHHSCGMDFLNPEDGSTPLVISGYENGDIYCWNSDTKSLLQLLDGSLYHHSSPVMSIHCFGNIMCSLALNGDCCLWRWV</sequence>
<evidence type="ECO:0000255" key="1"/>
<evidence type="ECO:0000269" key="2">
    <source>
    </source>
</evidence>
<evidence type="ECO:0000269" key="3">
    <source>
    </source>
</evidence>
<evidence type="ECO:0000269" key="4">
    <source>
    </source>
</evidence>
<evidence type="ECO:0000269" key="5">
    <source>
    </source>
</evidence>
<evidence type="ECO:0000269" key="6">
    <source>
    </source>
</evidence>
<evidence type="ECO:0000269" key="7">
    <source>
    </source>
</evidence>
<evidence type="ECO:0000303" key="8">
    <source>
    </source>
</evidence>
<evidence type="ECO:0000303" key="9">
    <source>
    </source>
</evidence>
<evidence type="ECO:0000303" key="10">
    <source>
    </source>
</evidence>
<evidence type="ECO:0000305" key="11"/>
<evidence type="ECO:0007744" key="12">
    <source>
        <dbReference type="PDB" id="6BX3"/>
    </source>
</evidence>
<evidence type="ECO:0007744" key="13">
    <source>
        <dbReference type="PDB" id="6VEN"/>
    </source>
</evidence>
<evidence type="ECO:0007829" key="14">
    <source>
        <dbReference type="PDB" id="6VEN"/>
    </source>
</evidence>
<reference key="1">
    <citation type="journal article" date="1994" name="EMBO J.">
        <title>Complete DNA sequence of yeast chromosome II.</title>
        <authorList>
            <person name="Feldmann H."/>
            <person name="Aigle M."/>
            <person name="Aljinovic G."/>
            <person name="Andre B."/>
            <person name="Baclet M.C."/>
            <person name="Barthe C."/>
            <person name="Baur A."/>
            <person name="Becam A.-M."/>
            <person name="Biteau N."/>
            <person name="Boles E."/>
            <person name="Brandt T."/>
            <person name="Brendel M."/>
            <person name="Brueckner M."/>
            <person name="Bussereau F."/>
            <person name="Christiansen C."/>
            <person name="Contreras R."/>
            <person name="Crouzet M."/>
            <person name="Cziepluch C."/>
            <person name="Demolis N."/>
            <person name="Delaveau T."/>
            <person name="Doignon F."/>
            <person name="Domdey H."/>
            <person name="Duesterhus S."/>
            <person name="Dubois E."/>
            <person name="Dujon B."/>
            <person name="El Bakkoury M."/>
            <person name="Entian K.-D."/>
            <person name="Feuermann M."/>
            <person name="Fiers W."/>
            <person name="Fobo G.M."/>
            <person name="Fritz C."/>
            <person name="Gassenhuber J."/>
            <person name="Glansdorff N."/>
            <person name="Goffeau A."/>
            <person name="Grivell L.A."/>
            <person name="de Haan M."/>
            <person name="Hein C."/>
            <person name="Herbert C.J."/>
            <person name="Hollenberg C.P."/>
            <person name="Holmstroem K."/>
            <person name="Jacq C."/>
            <person name="Jacquet M."/>
            <person name="Jauniaux J.-C."/>
            <person name="Jonniaux J.-L."/>
            <person name="Kallesoee T."/>
            <person name="Kiesau P."/>
            <person name="Kirchrath L."/>
            <person name="Koetter P."/>
            <person name="Korol S."/>
            <person name="Liebl S."/>
            <person name="Logghe M."/>
            <person name="Lohan A.J.E."/>
            <person name="Louis E.J."/>
            <person name="Li Z.Y."/>
            <person name="Maat M.J."/>
            <person name="Mallet L."/>
            <person name="Mannhaupt G."/>
            <person name="Messenguy F."/>
            <person name="Miosga T."/>
            <person name="Molemans F."/>
            <person name="Mueller S."/>
            <person name="Nasr F."/>
            <person name="Obermaier B."/>
            <person name="Perea J."/>
            <person name="Pierard A."/>
            <person name="Piravandi E."/>
            <person name="Pohl F.M."/>
            <person name="Pohl T.M."/>
            <person name="Potier S."/>
            <person name="Proft M."/>
            <person name="Purnelle B."/>
            <person name="Ramezani Rad M."/>
            <person name="Rieger M."/>
            <person name="Rose M."/>
            <person name="Schaaff-Gerstenschlaeger I."/>
            <person name="Scherens B."/>
            <person name="Schwarzlose C."/>
            <person name="Skala J."/>
            <person name="Slonimski P.P."/>
            <person name="Smits P.H.M."/>
            <person name="Souciet J.-L."/>
            <person name="Steensma H.Y."/>
            <person name="Stucka R."/>
            <person name="Urrestarazu L.A."/>
            <person name="van der Aart Q.J.M."/>
            <person name="Van Dyck L."/>
            <person name="Vassarotti A."/>
            <person name="Vetter I."/>
            <person name="Vierendeels F."/>
            <person name="Vissers S."/>
            <person name="Wagner G."/>
            <person name="de Wergifosse P."/>
            <person name="Wolfe K.H."/>
            <person name="Zagulski M."/>
            <person name="Zimmermann F.K."/>
            <person name="Mewes H.-W."/>
            <person name="Kleine K."/>
        </authorList>
    </citation>
    <scope>NUCLEOTIDE SEQUENCE [LARGE SCALE GENOMIC DNA]</scope>
    <source>
        <strain>ATCC 204508 / S288c</strain>
    </source>
</reference>
<reference key="2">
    <citation type="journal article" date="2014" name="G3 (Bethesda)">
        <title>The reference genome sequence of Saccharomyces cerevisiae: Then and now.</title>
        <authorList>
            <person name="Engel S.R."/>
            <person name="Dietrich F.S."/>
            <person name="Fisk D.G."/>
            <person name="Binkley G."/>
            <person name="Balakrishnan R."/>
            <person name="Costanzo M.C."/>
            <person name="Dwight S.S."/>
            <person name="Hitz B.C."/>
            <person name="Karra K."/>
            <person name="Nash R.S."/>
            <person name="Weng S."/>
            <person name="Wong E.D."/>
            <person name="Lloyd P."/>
            <person name="Skrzypek M.S."/>
            <person name="Miyasato S.R."/>
            <person name="Simison M."/>
            <person name="Cherry J.M."/>
        </authorList>
    </citation>
    <scope>GENOME REANNOTATION</scope>
    <source>
        <strain>ATCC 204508 / S288c</strain>
    </source>
</reference>
<reference key="3">
    <citation type="journal article" date="2007" name="Genome Res.">
        <title>Approaching a complete repository of sequence-verified protein-encoding clones for Saccharomyces cerevisiae.</title>
        <authorList>
            <person name="Hu Y."/>
            <person name="Rolfs A."/>
            <person name="Bhullar B."/>
            <person name="Murthy T.V.S."/>
            <person name="Zhu C."/>
            <person name="Berger M.F."/>
            <person name="Camargo A.A."/>
            <person name="Kelley F."/>
            <person name="McCarron S."/>
            <person name="Jepson D."/>
            <person name="Richardson A."/>
            <person name="Raphael J."/>
            <person name="Moreira D."/>
            <person name="Taycher E."/>
            <person name="Zuo D."/>
            <person name="Mohr S."/>
            <person name="Kane M.F."/>
            <person name="Williamson J."/>
            <person name="Simpson A.J.G."/>
            <person name="Bulyk M.L."/>
            <person name="Harlow E."/>
            <person name="Marsischky G."/>
            <person name="Kolodner R.D."/>
            <person name="LaBaer J."/>
        </authorList>
    </citation>
    <scope>NUCLEOTIDE SEQUENCE [GENOMIC DNA]</scope>
    <source>
        <strain>ATCC 204508 / S288c</strain>
    </source>
</reference>
<reference key="4">
    <citation type="journal article" date="2001" name="EMBO J.">
        <title>The Saccharomyces cerevisiae Set1 complex includes an Ash2 homologue and methylates histone 3 lysine 4.</title>
        <authorList>
            <person name="Roguev A."/>
            <person name="Schaft D."/>
            <person name="Shevchenko A."/>
            <person name="Pijnappel W.W.M.P."/>
            <person name="Wilm M."/>
            <person name="Aasland R."/>
            <person name="Stewart A.F."/>
        </authorList>
    </citation>
    <scope>FUNCTION</scope>
    <scope>SUBUNIT</scope>
</reference>
<reference key="5">
    <citation type="journal article" date="2001" name="Proc. Natl. Acad. Sci. U.S.A.">
        <title>COMPASS: a complex of proteins associated with a trithorax-related SET domain protein.</title>
        <authorList>
            <person name="Miller T."/>
            <person name="Krogan N.J."/>
            <person name="Dover J."/>
            <person name="Erdjument-Bromage H."/>
            <person name="Tempst P."/>
            <person name="Johnston M."/>
            <person name="Greenblatt J.F."/>
            <person name="Shilatifard A."/>
        </authorList>
    </citation>
    <scope>SUBUNIT</scope>
</reference>
<reference key="6">
    <citation type="journal article" date="2002" name="J. Biol. Chem.">
        <title>COMPASS, a histone H3 (Lysine 4) methyltransferase required for telomeric silencing of gene expression.</title>
        <authorList>
            <person name="Krogan N.J."/>
            <person name="Dover J."/>
            <person name="Khorrami S."/>
            <person name="Greenblatt J.F."/>
            <person name="Schneider J."/>
            <person name="Johnston M."/>
            <person name="Shilatifard A."/>
        </authorList>
    </citation>
    <scope>FUNCTION</scope>
</reference>
<reference key="7">
    <citation type="journal article" date="2002" name="Proc. Natl. Acad. Sci. U.S.A.">
        <title>A trithorax-group complex purified from Saccharomyces cerevisiae is required for methylation of histone H3.</title>
        <authorList>
            <person name="Nagy P.L."/>
            <person name="Griesenbeck J."/>
            <person name="Kornberg R.D."/>
            <person name="Cleary M.L."/>
        </authorList>
    </citation>
    <scope>FUNCTION</scope>
</reference>
<reference key="8">
    <citation type="journal article" date="2017" name="Cell Discov.">
        <title>Binding to RNA regulates Set1 function.</title>
        <authorList>
            <person name="Luciano P."/>
            <person name="Jeon J."/>
            <person name="El-Kaoutari A."/>
            <person name="Challal D."/>
            <person name="Bonnet A."/>
            <person name="Barucco M."/>
            <person name="Candelli T."/>
            <person name="Jourquin F."/>
            <person name="Lesage P."/>
            <person name="Kim J."/>
            <person name="Libri D."/>
            <person name="Geli V."/>
        </authorList>
    </citation>
    <scope>IDENTIFICATION IN THE SET1C/COMPASS COMPLEX</scope>
</reference>
<reference evidence="12" key="9">
    <citation type="journal article" date="2018" name="Cell">
        <title>Structure and conformational dynamics of a COMPASS histone H3K4 methyltransferase complex.</title>
        <authorList>
            <person name="Qu Q."/>
            <person name="Takahashi Y.H."/>
            <person name="Yang Y."/>
            <person name="Hu H."/>
            <person name="Zhang Y."/>
            <person name="Brunzelle J.S."/>
            <person name="Couture J.F."/>
            <person name="Shilatifard A."/>
            <person name="Skiniotis G."/>
        </authorList>
    </citation>
    <scope>STRUCTURE BY ELECTRON MICROSCOPY (4.30 ANGSTROMS) OF 2-315 WITHIN THE CORE COMPASS COMPLEX</scope>
    <scope>SUBUNIT</scope>
    <scope>FUNCTION</scope>
    <scope>MUTAGENESIS OF ASP-180; ASP-182 AND GLU-186</scope>
</reference>
<reference evidence="13" key="10">
    <citation type="journal article" date="2020" name="Elife">
        <title>Structural basis for COMPASS recognition of an H2B-ubiquitinated nucleosome.</title>
        <authorList>
            <person name="Worden E.J."/>
            <person name="Zhang X."/>
            <person name="Wolberger C."/>
        </authorList>
    </citation>
    <scope>STRUCTURE BY ELECTRON MICROSCOPY (3.37 ANGSTROMS) WITHIN THE CORE COMPASS H2B-UBIQUITIN NUCLEOSOME COMPLEX</scope>
    <scope>SUBUNIT</scope>
    <scope>FUNCTION</scope>
</reference>